<gene>
    <name type="primary">rpmC</name>
    <name type="ordered locus">M6_Spy0101</name>
</gene>
<comment type="similarity">
    <text evidence="1">Belongs to the universal ribosomal protein uL29 family.</text>
</comment>
<comment type="sequence caution" evidence="1">
    <conflict type="frameshift">
        <sequence resource="EMBL-CDS" id="AAT86236"/>
    </conflict>
</comment>
<name>RL29_STRP6</name>
<accession>Q5XEC7</accession>
<organism>
    <name type="scientific">Streptococcus pyogenes serotype M6 (strain ATCC BAA-946 / MGAS10394)</name>
    <dbReference type="NCBI Taxonomy" id="286636"/>
    <lineage>
        <taxon>Bacteria</taxon>
        <taxon>Bacillati</taxon>
        <taxon>Bacillota</taxon>
        <taxon>Bacilli</taxon>
        <taxon>Lactobacillales</taxon>
        <taxon>Streptococcaceae</taxon>
        <taxon>Streptococcus</taxon>
    </lineage>
</organism>
<protein>
    <recommendedName>
        <fullName evidence="1">Large ribosomal subunit protein uL29</fullName>
    </recommendedName>
    <alternativeName>
        <fullName>50S ribosomal protein L29</fullName>
    </alternativeName>
</protein>
<sequence length="68" mass="7962">MKLQEIKDFVKELRGLSQEELAKKENELKKELFDLRFQAAAGQLEKTARLDEVKKQIARVKTVQSEMK</sequence>
<dbReference type="EMBL" id="CP000003">
    <property type="protein sequence ID" value="AAT86236.1"/>
    <property type="status" value="ALT_FRAME"/>
    <property type="molecule type" value="Genomic_DNA"/>
</dbReference>
<dbReference type="SMR" id="Q5XEC7"/>
<dbReference type="KEGG" id="spa:M6_Spy0101"/>
<dbReference type="HOGENOM" id="CLU_158491_1_0_9"/>
<dbReference type="Proteomes" id="UP000001167">
    <property type="component" value="Chromosome"/>
</dbReference>
<dbReference type="GO" id="GO:0022625">
    <property type="term" value="C:cytosolic large ribosomal subunit"/>
    <property type="evidence" value="ECO:0007669"/>
    <property type="project" value="TreeGrafter"/>
</dbReference>
<dbReference type="GO" id="GO:0003735">
    <property type="term" value="F:structural constituent of ribosome"/>
    <property type="evidence" value="ECO:0007669"/>
    <property type="project" value="InterPro"/>
</dbReference>
<dbReference type="GO" id="GO:0006412">
    <property type="term" value="P:translation"/>
    <property type="evidence" value="ECO:0007669"/>
    <property type="project" value="UniProtKB-UniRule"/>
</dbReference>
<dbReference type="CDD" id="cd00427">
    <property type="entry name" value="Ribosomal_L29_HIP"/>
    <property type="match status" value="1"/>
</dbReference>
<dbReference type="FunFam" id="1.10.287.310:FF:000001">
    <property type="entry name" value="50S ribosomal protein L29"/>
    <property type="match status" value="1"/>
</dbReference>
<dbReference type="Gene3D" id="1.10.287.310">
    <property type="match status" value="1"/>
</dbReference>
<dbReference type="HAMAP" id="MF_00374">
    <property type="entry name" value="Ribosomal_uL29"/>
    <property type="match status" value="1"/>
</dbReference>
<dbReference type="InterPro" id="IPR050063">
    <property type="entry name" value="Ribosomal_protein_uL29"/>
</dbReference>
<dbReference type="InterPro" id="IPR001854">
    <property type="entry name" value="Ribosomal_uL29"/>
</dbReference>
<dbReference type="InterPro" id="IPR018254">
    <property type="entry name" value="Ribosomal_uL29_CS"/>
</dbReference>
<dbReference type="InterPro" id="IPR036049">
    <property type="entry name" value="Ribosomal_uL29_sf"/>
</dbReference>
<dbReference type="NCBIfam" id="TIGR00012">
    <property type="entry name" value="L29"/>
    <property type="match status" value="1"/>
</dbReference>
<dbReference type="PANTHER" id="PTHR10916">
    <property type="entry name" value="60S RIBOSOMAL PROTEIN L35/50S RIBOSOMAL PROTEIN L29"/>
    <property type="match status" value="1"/>
</dbReference>
<dbReference type="PANTHER" id="PTHR10916:SF0">
    <property type="entry name" value="LARGE RIBOSOMAL SUBUNIT PROTEIN UL29C"/>
    <property type="match status" value="1"/>
</dbReference>
<dbReference type="Pfam" id="PF00831">
    <property type="entry name" value="Ribosomal_L29"/>
    <property type="match status" value="1"/>
</dbReference>
<dbReference type="SUPFAM" id="SSF46561">
    <property type="entry name" value="Ribosomal protein L29 (L29p)"/>
    <property type="match status" value="1"/>
</dbReference>
<dbReference type="PROSITE" id="PS00579">
    <property type="entry name" value="RIBOSOMAL_L29"/>
    <property type="match status" value="1"/>
</dbReference>
<evidence type="ECO:0000305" key="1"/>
<feature type="chain" id="PRO_0000130472" description="Large ribosomal subunit protein uL29">
    <location>
        <begin position="1"/>
        <end position="68"/>
    </location>
</feature>
<proteinExistence type="inferred from homology"/>
<reference key="1">
    <citation type="journal article" date="2004" name="J. Infect. Dis.">
        <title>Progress toward characterization of the group A Streptococcus metagenome: complete genome sequence of a macrolide-resistant serotype M6 strain.</title>
        <authorList>
            <person name="Banks D.J."/>
            <person name="Porcella S.F."/>
            <person name="Barbian K.D."/>
            <person name="Beres S.B."/>
            <person name="Philips L.E."/>
            <person name="Voyich J.M."/>
            <person name="DeLeo F.R."/>
            <person name="Martin J.M."/>
            <person name="Somerville G.A."/>
            <person name="Musser J.M."/>
        </authorList>
    </citation>
    <scope>NUCLEOTIDE SEQUENCE [LARGE SCALE GENOMIC DNA]</scope>
    <source>
        <strain>ATCC BAA-946 / MGAS10394</strain>
    </source>
</reference>
<keyword id="KW-0687">Ribonucleoprotein</keyword>
<keyword id="KW-0689">Ribosomal protein</keyword>